<name>RL20_GEOSL</name>
<protein>
    <recommendedName>
        <fullName evidence="1">Large ribosomal subunit protein bL20</fullName>
    </recommendedName>
    <alternativeName>
        <fullName evidence="2">50S ribosomal protein L20</fullName>
    </alternativeName>
</protein>
<gene>
    <name evidence="1" type="primary">rplT</name>
    <name type="ordered locus">GSU1518</name>
</gene>
<proteinExistence type="inferred from homology"/>
<keyword id="KW-1185">Reference proteome</keyword>
<keyword id="KW-0687">Ribonucleoprotein</keyword>
<keyword id="KW-0689">Ribosomal protein</keyword>
<keyword id="KW-0694">RNA-binding</keyword>
<keyword id="KW-0699">rRNA-binding</keyword>
<organism>
    <name type="scientific">Geobacter sulfurreducens (strain ATCC 51573 / DSM 12127 / PCA)</name>
    <dbReference type="NCBI Taxonomy" id="243231"/>
    <lineage>
        <taxon>Bacteria</taxon>
        <taxon>Pseudomonadati</taxon>
        <taxon>Thermodesulfobacteriota</taxon>
        <taxon>Desulfuromonadia</taxon>
        <taxon>Geobacterales</taxon>
        <taxon>Geobacteraceae</taxon>
        <taxon>Geobacter</taxon>
    </lineage>
</organism>
<reference key="1">
    <citation type="journal article" date="2003" name="Science">
        <title>Genome of Geobacter sulfurreducens: metal reduction in subsurface environments.</title>
        <authorList>
            <person name="Methe B.A."/>
            <person name="Nelson K.E."/>
            <person name="Eisen J.A."/>
            <person name="Paulsen I.T."/>
            <person name="Nelson W.C."/>
            <person name="Heidelberg J.F."/>
            <person name="Wu D."/>
            <person name="Wu M."/>
            <person name="Ward N.L."/>
            <person name="Beanan M.J."/>
            <person name="Dodson R.J."/>
            <person name="Madupu R."/>
            <person name="Brinkac L.M."/>
            <person name="Daugherty S.C."/>
            <person name="DeBoy R.T."/>
            <person name="Durkin A.S."/>
            <person name="Gwinn M.L."/>
            <person name="Kolonay J.F."/>
            <person name="Sullivan S.A."/>
            <person name="Haft D.H."/>
            <person name="Selengut J."/>
            <person name="Davidsen T.M."/>
            <person name="Zafar N."/>
            <person name="White O."/>
            <person name="Tran B."/>
            <person name="Romero C."/>
            <person name="Forberger H.A."/>
            <person name="Weidman J.F."/>
            <person name="Khouri H.M."/>
            <person name="Feldblyum T.V."/>
            <person name="Utterback T.R."/>
            <person name="Van Aken S.E."/>
            <person name="Lovley D.R."/>
            <person name="Fraser C.M."/>
        </authorList>
    </citation>
    <scope>NUCLEOTIDE SEQUENCE [LARGE SCALE GENOMIC DNA]</scope>
    <source>
        <strain>ATCC 51573 / DSM 12127 / PCA</strain>
    </source>
</reference>
<feature type="chain" id="PRO_0000177162" description="Large ribosomal subunit protein bL20">
    <location>
        <begin position="1"/>
        <end position="117"/>
    </location>
</feature>
<accession>Q74D01</accession>
<comment type="function">
    <text evidence="1">Binds directly to 23S ribosomal RNA and is necessary for the in vitro assembly process of the 50S ribosomal subunit. It is not involved in the protein synthesizing functions of that subunit.</text>
</comment>
<comment type="similarity">
    <text evidence="1">Belongs to the bacterial ribosomal protein bL20 family.</text>
</comment>
<dbReference type="EMBL" id="AE017180">
    <property type="protein sequence ID" value="AAR34892.1"/>
    <property type="molecule type" value="Genomic_DNA"/>
</dbReference>
<dbReference type="RefSeq" id="NP_952569.1">
    <property type="nucleotide sequence ID" value="NC_002939.5"/>
</dbReference>
<dbReference type="RefSeq" id="WP_010942165.1">
    <property type="nucleotide sequence ID" value="NC_002939.5"/>
</dbReference>
<dbReference type="SMR" id="Q74D01"/>
<dbReference type="FunCoup" id="Q74D01">
    <property type="interactions" value="629"/>
</dbReference>
<dbReference type="STRING" id="243231.GSU1518"/>
<dbReference type="EnsemblBacteria" id="AAR34892">
    <property type="protein sequence ID" value="AAR34892"/>
    <property type="gene ID" value="GSU1518"/>
</dbReference>
<dbReference type="KEGG" id="gsu:GSU1518"/>
<dbReference type="PATRIC" id="fig|243231.5.peg.1560"/>
<dbReference type="eggNOG" id="COG0292">
    <property type="taxonomic scope" value="Bacteria"/>
</dbReference>
<dbReference type="HOGENOM" id="CLU_123265_0_1_7"/>
<dbReference type="InParanoid" id="Q74D01"/>
<dbReference type="OrthoDB" id="9808966at2"/>
<dbReference type="Proteomes" id="UP000000577">
    <property type="component" value="Chromosome"/>
</dbReference>
<dbReference type="GO" id="GO:0022625">
    <property type="term" value="C:cytosolic large ribosomal subunit"/>
    <property type="evidence" value="ECO:0000318"/>
    <property type="project" value="GO_Central"/>
</dbReference>
<dbReference type="GO" id="GO:0019843">
    <property type="term" value="F:rRNA binding"/>
    <property type="evidence" value="ECO:0007669"/>
    <property type="project" value="UniProtKB-UniRule"/>
</dbReference>
<dbReference type="GO" id="GO:0003735">
    <property type="term" value="F:structural constituent of ribosome"/>
    <property type="evidence" value="ECO:0000318"/>
    <property type="project" value="GO_Central"/>
</dbReference>
<dbReference type="GO" id="GO:0000027">
    <property type="term" value="P:ribosomal large subunit assembly"/>
    <property type="evidence" value="ECO:0007669"/>
    <property type="project" value="UniProtKB-UniRule"/>
</dbReference>
<dbReference type="GO" id="GO:0006412">
    <property type="term" value="P:translation"/>
    <property type="evidence" value="ECO:0007669"/>
    <property type="project" value="InterPro"/>
</dbReference>
<dbReference type="CDD" id="cd07026">
    <property type="entry name" value="Ribosomal_L20"/>
    <property type="match status" value="1"/>
</dbReference>
<dbReference type="FunFam" id="1.10.1900.20:FF:000001">
    <property type="entry name" value="50S ribosomal protein L20"/>
    <property type="match status" value="1"/>
</dbReference>
<dbReference type="Gene3D" id="6.10.160.10">
    <property type="match status" value="1"/>
</dbReference>
<dbReference type="Gene3D" id="1.10.1900.20">
    <property type="entry name" value="Ribosomal protein L20"/>
    <property type="match status" value="1"/>
</dbReference>
<dbReference type="HAMAP" id="MF_00382">
    <property type="entry name" value="Ribosomal_bL20"/>
    <property type="match status" value="1"/>
</dbReference>
<dbReference type="InterPro" id="IPR005813">
    <property type="entry name" value="Ribosomal_bL20"/>
</dbReference>
<dbReference type="InterPro" id="IPR049946">
    <property type="entry name" value="RIBOSOMAL_L20_CS"/>
</dbReference>
<dbReference type="InterPro" id="IPR035566">
    <property type="entry name" value="Ribosomal_protein_bL20_C"/>
</dbReference>
<dbReference type="NCBIfam" id="TIGR01032">
    <property type="entry name" value="rplT_bact"/>
    <property type="match status" value="1"/>
</dbReference>
<dbReference type="PANTHER" id="PTHR10986">
    <property type="entry name" value="39S RIBOSOMAL PROTEIN L20"/>
    <property type="match status" value="1"/>
</dbReference>
<dbReference type="Pfam" id="PF00453">
    <property type="entry name" value="Ribosomal_L20"/>
    <property type="match status" value="1"/>
</dbReference>
<dbReference type="PRINTS" id="PR00062">
    <property type="entry name" value="RIBOSOMALL20"/>
</dbReference>
<dbReference type="SUPFAM" id="SSF74731">
    <property type="entry name" value="Ribosomal protein L20"/>
    <property type="match status" value="1"/>
</dbReference>
<dbReference type="PROSITE" id="PS00937">
    <property type="entry name" value="RIBOSOMAL_L20"/>
    <property type="match status" value="1"/>
</dbReference>
<sequence>MPRVKRGFKARRRRNKVLKLAKGFRGARSKLFRSATEAVDRALNYAFRDRKVKKRDFRALWITRINAASRLNGLSYSKLIHGLKQAQVEIDRKVLADLAVSDPKGFSEIATLAKAQF</sequence>
<evidence type="ECO:0000255" key="1">
    <source>
        <dbReference type="HAMAP-Rule" id="MF_00382"/>
    </source>
</evidence>
<evidence type="ECO:0000305" key="2"/>